<comment type="function">
    <text evidence="1">Catalyzes the hydrolysis of the adenine ring of phosphoribosyl-AMP.</text>
</comment>
<comment type="catalytic activity">
    <reaction evidence="1">
        <text>1-(5-phospho-beta-D-ribosyl)-5'-AMP + H2O = 1-(5-phospho-beta-D-ribosyl)-5-[(5-phospho-beta-D-ribosylamino)methylideneamino]imidazole-4-carboxamide</text>
        <dbReference type="Rhea" id="RHEA:20049"/>
        <dbReference type="ChEBI" id="CHEBI:15377"/>
        <dbReference type="ChEBI" id="CHEBI:58435"/>
        <dbReference type="ChEBI" id="CHEBI:59457"/>
        <dbReference type="EC" id="3.5.4.19"/>
    </reaction>
</comment>
<comment type="cofactor">
    <cofactor evidence="1">
        <name>Mg(2+)</name>
        <dbReference type="ChEBI" id="CHEBI:18420"/>
    </cofactor>
    <text evidence="1">Binds 1 Mg(2+) ion per subunit.</text>
</comment>
<comment type="cofactor">
    <cofactor evidence="1">
        <name>Zn(2+)</name>
        <dbReference type="ChEBI" id="CHEBI:29105"/>
    </cofactor>
    <text evidence="1">Binds 1 zinc ion per subunit.</text>
</comment>
<comment type="pathway">
    <text evidence="1">Amino-acid biosynthesis; L-histidine biosynthesis; L-histidine from 5-phospho-alpha-D-ribose 1-diphosphate: step 3/9.</text>
</comment>
<comment type="subunit">
    <text evidence="1">Homodimer.</text>
</comment>
<comment type="subcellular location">
    <subcellularLocation>
        <location evidence="1">Cytoplasm</location>
    </subcellularLocation>
</comment>
<comment type="similarity">
    <text evidence="1">Belongs to the PRA-CH family.</text>
</comment>
<reference key="1">
    <citation type="submission" date="2006-03" db="EMBL/GenBank/DDBJ databases">
        <title>Complete sequence of chromosome of Nitrobacter hamburgensis X14.</title>
        <authorList>
            <consortium name="US DOE Joint Genome Institute"/>
            <person name="Copeland A."/>
            <person name="Lucas S."/>
            <person name="Lapidus A."/>
            <person name="Barry K."/>
            <person name="Detter J.C."/>
            <person name="Glavina del Rio T."/>
            <person name="Hammon N."/>
            <person name="Israni S."/>
            <person name="Dalin E."/>
            <person name="Tice H."/>
            <person name="Pitluck S."/>
            <person name="Chain P."/>
            <person name="Malfatti S."/>
            <person name="Shin M."/>
            <person name="Vergez L."/>
            <person name="Schmutz J."/>
            <person name="Larimer F."/>
            <person name="Land M."/>
            <person name="Hauser L."/>
            <person name="Kyrpides N."/>
            <person name="Ivanova N."/>
            <person name="Ward B."/>
            <person name="Arp D."/>
            <person name="Klotz M."/>
            <person name="Stein L."/>
            <person name="O'Mullan G."/>
            <person name="Starkenburg S."/>
            <person name="Sayavedra L."/>
            <person name="Poret-Peterson A.T."/>
            <person name="Gentry M.E."/>
            <person name="Bruce D."/>
            <person name="Richardson P."/>
        </authorList>
    </citation>
    <scope>NUCLEOTIDE SEQUENCE [LARGE SCALE GENOMIC DNA]</scope>
    <source>
        <strain>DSM 10229 / NCIMB 13809 / X14</strain>
    </source>
</reference>
<organism>
    <name type="scientific">Nitrobacter hamburgensis (strain DSM 10229 / NCIMB 13809 / X14)</name>
    <dbReference type="NCBI Taxonomy" id="323097"/>
    <lineage>
        <taxon>Bacteria</taxon>
        <taxon>Pseudomonadati</taxon>
        <taxon>Pseudomonadota</taxon>
        <taxon>Alphaproteobacteria</taxon>
        <taxon>Hyphomicrobiales</taxon>
        <taxon>Nitrobacteraceae</taxon>
        <taxon>Nitrobacter</taxon>
    </lineage>
</organism>
<gene>
    <name evidence="1" type="primary">hisI</name>
    <name type="ordered locus">Nham_1658</name>
</gene>
<evidence type="ECO:0000255" key="1">
    <source>
        <dbReference type="HAMAP-Rule" id="MF_01021"/>
    </source>
</evidence>
<feature type="chain" id="PRO_1000063422" description="Phosphoribosyl-AMP cyclohydrolase">
    <location>
        <begin position="1"/>
        <end position="147"/>
    </location>
</feature>
<feature type="binding site" evidence="1">
    <location>
        <position position="89"/>
    </location>
    <ligand>
        <name>Mg(2+)</name>
        <dbReference type="ChEBI" id="CHEBI:18420"/>
    </ligand>
</feature>
<feature type="binding site" evidence="1">
    <location>
        <position position="90"/>
    </location>
    <ligand>
        <name>Zn(2+)</name>
        <dbReference type="ChEBI" id="CHEBI:29105"/>
        <note>ligand shared between dimeric partners</note>
    </ligand>
</feature>
<feature type="binding site" evidence="1">
    <location>
        <position position="91"/>
    </location>
    <ligand>
        <name>Mg(2+)</name>
        <dbReference type="ChEBI" id="CHEBI:18420"/>
    </ligand>
</feature>
<feature type="binding site" evidence="1">
    <location>
        <position position="93"/>
    </location>
    <ligand>
        <name>Mg(2+)</name>
        <dbReference type="ChEBI" id="CHEBI:18420"/>
    </ligand>
</feature>
<feature type="binding site" evidence="1">
    <location>
        <position position="106"/>
    </location>
    <ligand>
        <name>Zn(2+)</name>
        <dbReference type="ChEBI" id="CHEBI:29105"/>
        <note>ligand shared between dimeric partners</note>
    </ligand>
</feature>
<feature type="binding site" evidence="1">
    <location>
        <position position="113"/>
    </location>
    <ligand>
        <name>Zn(2+)</name>
        <dbReference type="ChEBI" id="CHEBI:29105"/>
        <note>ligand shared between dimeric partners</note>
    </ligand>
</feature>
<accession>Q1QMS2</accession>
<protein>
    <recommendedName>
        <fullName evidence="1">Phosphoribosyl-AMP cyclohydrolase</fullName>
        <shortName evidence="1">PRA-CH</shortName>
        <ecNumber evidence="1">3.5.4.19</ecNumber>
    </recommendedName>
</protein>
<dbReference type="EC" id="3.5.4.19" evidence="1"/>
<dbReference type="EMBL" id="CP000319">
    <property type="protein sequence ID" value="ABE62475.1"/>
    <property type="molecule type" value="Genomic_DNA"/>
</dbReference>
<dbReference type="RefSeq" id="WP_011510157.1">
    <property type="nucleotide sequence ID" value="NC_007964.1"/>
</dbReference>
<dbReference type="SMR" id="Q1QMS2"/>
<dbReference type="STRING" id="323097.Nham_1658"/>
<dbReference type="KEGG" id="nha:Nham_1658"/>
<dbReference type="eggNOG" id="COG0139">
    <property type="taxonomic scope" value="Bacteria"/>
</dbReference>
<dbReference type="HOGENOM" id="CLU_048577_5_0_5"/>
<dbReference type="OrthoDB" id="9795769at2"/>
<dbReference type="UniPathway" id="UPA00031">
    <property type="reaction ID" value="UER00008"/>
</dbReference>
<dbReference type="Proteomes" id="UP000001953">
    <property type="component" value="Chromosome"/>
</dbReference>
<dbReference type="GO" id="GO:0005737">
    <property type="term" value="C:cytoplasm"/>
    <property type="evidence" value="ECO:0007669"/>
    <property type="project" value="UniProtKB-SubCell"/>
</dbReference>
<dbReference type="GO" id="GO:0000287">
    <property type="term" value="F:magnesium ion binding"/>
    <property type="evidence" value="ECO:0007669"/>
    <property type="project" value="UniProtKB-UniRule"/>
</dbReference>
<dbReference type="GO" id="GO:0004635">
    <property type="term" value="F:phosphoribosyl-AMP cyclohydrolase activity"/>
    <property type="evidence" value="ECO:0007669"/>
    <property type="project" value="UniProtKB-UniRule"/>
</dbReference>
<dbReference type="GO" id="GO:0008270">
    <property type="term" value="F:zinc ion binding"/>
    <property type="evidence" value="ECO:0007669"/>
    <property type="project" value="UniProtKB-UniRule"/>
</dbReference>
<dbReference type="GO" id="GO:0000105">
    <property type="term" value="P:L-histidine biosynthetic process"/>
    <property type="evidence" value="ECO:0007669"/>
    <property type="project" value="UniProtKB-UniRule"/>
</dbReference>
<dbReference type="FunFam" id="3.10.20.810:FF:000001">
    <property type="entry name" value="Histidine biosynthesis bifunctional protein HisIE"/>
    <property type="match status" value="1"/>
</dbReference>
<dbReference type="Gene3D" id="4.10.80.70">
    <property type="match status" value="1"/>
</dbReference>
<dbReference type="Gene3D" id="3.10.20.810">
    <property type="entry name" value="Phosphoribosyl-AMP cyclohydrolase"/>
    <property type="match status" value="1"/>
</dbReference>
<dbReference type="HAMAP" id="MF_01021">
    <property type="entry name" value="HisI"/>
    <property type="match status" value="1"/>
</dbReference>
<dbReference type="InterPro" id="IPR026660">
    <property type="entry name" value="PRA-CH"/>
</dbReference>
<dbReference type="InterPro" id="IPR002496">
    <property type="entry name" value="PRib_AMP_CycHydrolase_dom"/>
</dbReference>
<dbReference type="InterPro" id="IPR038019">
    <property type="entry name" value="PRib_AMP_CycHydrolase_sf"/>
</dbReference>
<dbReference type="NCBIfam" id="NF000768">
    <property type="entry name" value="PRK00051.1"/>
    <property type="match status" value="1"/>
</dbReference>
<dbReference type="PANTHER" id="PTHR42945">
    <property type="entry name" value="HISTIDINE BIOSYNTHESIS BIFUNCTIONAL PROTEIN"/>
    <property type="match status" value="1"/>
</dbReference>
<dbReference type="PANTHER" id="PTHR42945:SF1">
    <property type="entry name" value="HISTIDINE BIOSYNTHESIS BIFUNCTIONAL PROTEIN HIS7"/>
    <property type="match status" value="1"/>
</dbReference>
<dbReference type="Pfam" id="PF01502">
    <property type="entry name" value="PRA-CH"/>
    <property type="match status" value="1"/>
</dbReference>
<dbReference type="SUPFAM" id="SSF141734">
    <property type="entry name" value="HisI-like"/>
    <property type="match status" value="1"/>
</dbReference>
<proteinExistence type="inferred from homology"/>
<keyword id="KW-0028">Amino-acid biosynthesis</keyword>
<keyword id="KW-0963">Cytoplasm</keyword>
<keyword id="KW-0368">Histidine biosynthesis</keyword>
<keyword id="KW-0378">Hydrolase</keyword>
<keyword id="KW-0460">Magnesium</keyword>
<keyword id="KW-0479">Metal-binding</keyword>
<keyword id="KW-1185">Reference proteome</keyword>
<keyword id="KW-0862">Zinc</keyword>
<sequence length="147" mass="16412">MSRPTSSSESGIEEGLAFQPRFDASGLVTCVATDARTGDVLMVAHMNEEALRRTVETGDAWYYSRSRKALWRKGESSGQVQRVVEMRTDCDQDAVWIKVEQRGAACHTGRRSCFYRAVTRGEGGEARVAFVDADRLFDPADVYHKKS</sequence>
<name>HIS3_NITHX</name>